<organism>
    <name type="scientific">Saccharomyces cerevisiae (strain ATCC 204508 / S288c)</name>
    <name type="common">Baker's yeast</name>
    <dbReference type="NCBI Taxonomy" id="559292"/>
    <lineage>
        <taxon>Eukaryota</taxon>
        <taxon>Fungi</taxon>
        <taxon>Dikarya</taxon>
        <taxon>Ascomycota</taxon>
        <taxon>Saccharomycotina</taxon>
        <taxon>Saccharomycetes</taxon>
        <taxon>Saccharomycetales</taxon>
        <taxon>Saccharomycetaceae</taxon>
        <taxon>Saccharomyces</taxon>
    </lineage>
</organism>
<keyword id="KW-0029">Amino-acid transport</keyword>
<keyword id="KW-0325">Glycoprotein</keyword>
<keyword id="KW-0472">Membrane</keyword>
<keyword id="KW-1185">Reference proteome</keyword>
<keyword id="KW-0812">Transmembrane</keyword>
<keyword id="KW-1133">Transmembrane helix</keyword>
<keyword id="KW-0813">Transport</keyword>
<keyword id="KW-0926">Vacuole</keyword>
<feature type="chain" id="PRO_0000173427" description="Vacuolar basic amino acid transporter 5">
    <location>
        <begin position="1"/>
        <end position="582"/>
    </location>
</feature>
<feature type="topological domain" description="Cytoplasmic" evidence="1">
    <location>
        <begin position="1"/>
        <end position="44"/>
    </location>
</feature>
<feature type="transmembrane region" description="Helical" evidence="2">
    <location>
        <begin position="45"/>
        <end position="65"/>
    </location>
</feature>
<feature type="topological domain" description="Vacuolar" evidence="1">
    <location>
        <begin position="66"/>
        <end position="80"/>
    </location>
</feature>
<feature type="transmembrane region" description="Helical" evidence="2">
    <location>
        <begin position="81"/>
        <end position="101"/>
    </location>
</feature>
<feature type="topological domain" description="Cytoplasmic" evidence="1">
    <location>
        <begin position="102"/>
        <end position="104"/>
    </location>
</feature>
<feature type="transmembrane region" description="Helical" evidence="2">
    <location>
        <begin position="105"/>
        <end position="125"/>
    </location>
</feature>
<feature type="topological domain" description="Vacuolar" evidence="1">
    <location>
        <begin position="126"/>
        <end position="132"/>
    </location>
</feature>
<feature type="transmembrane region" description="Helical" evidence="2">
    <location>
        <begin position="133"/>
        <end position="153"/>
    </location>
</feature>
<feature type="topological domain" description="Cytoplasmic" evidence="1">
    <location>
        <begin position="154"/>
        <end position="160"/>
    </location>
</feature>
<feature type="transmembrane region" description="Helical" evidence="2">
    <location>
        <begin position="161"/>
        <end position="181"/>
    </location>
</feature>
<feature type="topological domain" description="Vacuolar" evidence="1">
    <location>
        <begin position="182"/>
        <end position="191"/>
    </location>
</feature>
<feature type="transmembrane region" description="Helical" evidence="2">
    <location>
        <begin position="192"/>
        <end position="212"/>
    </location>
</feature>
<feature type="topological domain" description="Cytoplasmic" evidence="1">
    <location>
        <begin position="213"/>
        <end position="256"/>
    </location>
</feature>
<feature type="transmembrane region" description="Helical" evidence="2">
    <location>
        <begin position="257"/>
        <end position="277"/>
    </location>
</feature>
<feature type="topological domain" description="Vacuolar" evidence="1">
    <location>
        <begin position="278"/>
        <end position="287"/>
    </location>
</feature>
<feature type="transmembrane region" description="Helical" evidence="2">
    <location>
        <begin position="288"/>
        <end position="308"/>
    </location>
</feature>
<feature type="topological domain" description="Cytoplasmic" evidence="1">
    <location>
        <begin position="309"/>
        <end position="329"/>
    </location>
</feature>
<feature type="transmembrane region" description="Helical" evidence="2">
    <location>
        <begin position="330"/>
        <end position="350"/>
    </location>
</feature>
<feature type="topological domain" description="Vacuolar" evidence="1">
    <location>
        <begin position="351"/>
        <end position="372"/>
    </location>
</feature>
<feature type="transmembrane region" description="Helical" evidence="2">
    <location>
        <begin position="373"/>
        <end position="393"/>
    </location>
</feature>
<feature type="topological domain" description="Cytoplasmic" evidence="1">
    <location>
        <begin position="394"/>
        <end position="401"/>
    </location>
</feature>
<feature type="transmembrane region" description="Helical" evidence="2">
    <location>
        <begin position="402"/>
        <end position="422"/>
    </location>
</feature>
<feature type="topological domain" description="Vacuolar" evidence="1">
    <location>
        <begin position="423"/>
        <end position="430"/>
    </location>
</feature>
<feature type="transmembrane region" description="Helical" evidence="2">
    <location>
        <begin position="431"/>
        <end position="451"/>
    </location>
</feature>
<feature type="topological domain" description="Cytoplasmic" evidence="1">
    <location>
        <begin position="452"/>
        <end position="469"/>
    </location>
</feature>
<feature type="transmembrane region" description="Helical" evidence="2">
    <location>
        <begin position="470"/>
        <end position="492"/>
    </location>
</feature>
<feature type="topological domain" description="Vacuolar" evidence="1">
    <location>
        <begin position="493"/>
        <end position="539"/>
    </location>
</feature>
<feature type="transmembrane region" description="Helical" evidence="2">
    <location>
        <begin position="540"/>
        <end position="560"/>
    </location>
</feature>
<feature type="topological domain" description="Cytoplasmic" evidence="1">
    <location>
        <begin position="561"/>
        <end position="582"/>
    </location>
</feature>
<feature type="glycosylation site" description="N-linked (GlcNAc...) asparagine" evidence="2">
    <location>
        <position position="70"/>
    </location>
</feature>
<feature type="glycosylation site" description="N-linked (GlcNAc...) asparagine" evidence="2">
    <location>
        <position position="423"/>
    </location>
</feature>
<evidence type="ECO:0000250" key="1"/>
<evidence type="ECO:0000255" key="2"/>
<evidence type="ECO:0000269" key="3">
    <source>
    </source>
</evidence>
<evidence type="ECO:0000305" key="4"/>
<dbReference type="EMBL" id="Z28330">
    <property type="protein sequence ID" value="CAA82185.1"/>
    <property type="molecule type" value="Genomic_DNA"/>
</dbReference>
<dbReference type="EMBL" id="BK006944">
    <property type="protein sequence ID" value="DAA09256.1"/>
    <property type="molecule type" value="Genomic_DNA"/>
</dbReference>
<dbReference type="PIR" id="S38184">
    <property type="entry name" value="S38184"/>
</dbReference>
<dbReference type="RefSeq" id="NP_013031.3">
    <property type="nucleotide sequence ID" value="NM_001179895.3"/>
</dbReference>
<dbReference type="SMR" id="P36172"/>
<dbReference type="BioGRID" id="34236">
    <property type="interactions" value="107"/>
</dbReference>
<dbReference type="DIP" id="DIP-5086N"/>
<dbReference type="FunCoup" id="P36172">
    <property type="interactions" value="43"/>
</dbReference>
<dbReference type="IntAct" id="P36172">
    <property type="interactions" value="3"/>
</dbReference>
<dbReference type="MINT" id="P36172"/>
<dbReference type="STRING" id="4932.YKR105C"/>
<dbReference type="GlyCosmos" id="P36172">
    <property type="glycosylation" value="2 sites, No reported glycans"/>
</dbReference>
<dbReference type="GlyGen" id="P36172">
    <property type="glycosylation" value="2 sites"/>
</dbReference>
<dbReference type="PaxDb" id="4932-YKR105C"/>
<dbReference type="EnsemblFungi" id="YKR105C_mRNA">
    <property type="protein sequence ID" value="YKR105C"/>
    <property type="gene ID" value="YKR105C"/>
</dbReference>
<dbReference type="GeneID" id="853980"/>
<dbReference type="KEGG" id="sce:YKR105C"/>
<dbReference type="AGR" id="SGD:S000001813"/>
<dbReference type="SGD" id="S000001813">
    <property type="gene designation" value="VBA5"/>
</dbReference>
<dbReference type="VEuPathDB" id="FungiDB:YKR105C"/>
<dbReference type="eggNOG" id="KOG0254">
    <property type="taxonomic scope" value="Eukaryota"/>
</dbReference>
<dbReference type="GeneTree" id="ENSGT00940000176638"/>
<dbReference type="HOGENOM" id="CLU_000960_22_1_1"/>
<dbReference type="InParanoid" id="P36172"/>
<dbReference type="OMA" id="VWKPEQA"/>
<dbReference type="OrthoDB" id="10021397at2759"/>
<dbReference type="BioCyc" id="YEAST:G3O-32067-MONOMER"/>
<dbReference type="BioGRID-ORCS" id="853980">
    <property type="hits" value="0 hits in 10 CRISPR screens"/>
</dbReference>
<dbReference type="PRO" id="PR:P36172"/>
<dbReference type="Proteomes" id="UP000002311">
    <property type="component" value="Chromosome XI"/>
</dbReference>
<dbReference type="RNAct" id="P36172">
    <property type="molecule type" value="protein"/>
</dbReference>
<dbReference type="GO" id="GO:0005886">
    <property type="term" value="C:plasma membrane"/>
    <property type="evidence" value="ECO:0000314"/>
    <property type="project" value="SGD"/>
</dbReference>
<dbReference type="GO" id="GO:0005774">
    <property type="term" value="C:vacuolar membrane"/>
    <property type="evidence" value="ECO:0007669"/>
    <property type="project" value="UniProtKB-SubCell"/>
</dbReference>
<dbReference type="GO" id="GO:0022857">
    <property type="term" value="F:transmembrane transporter activity"/>
    <property type="evidence" value="ECO:0000318"/>
    <property type="project" value="GO_Central"/>
</dbReference>
<dbReference type="GO" id="GO:1903826">
    <property type="term" value="P:L-arginine transmembrane transport"/>
    <property type="evidence" value="ECO:0000315"/>
    <property type="project" value="SGD"/>
</dbReference>
<dbReference type="GO" id="GO:0055085">
    <property type="term" value="P:transmembrane transport"/>
    <property type="evidence" value="ECO:0000318"/>
    <property type="project" value="GO_Central"/>
</dbReference>
<dbReference type="CDD" id="cd17502">
    <property type="entry name" value="MFS_Azr1_MDR_like"/>
    <property type="match status" value="1"/>
</dbReference>
<dbReference type="FunFam" id="1.20.1250.20:FF:000373">
    <property type="entry name" value="Vacuolar basic amino acid transporter"/>
    <property type="match status" value="1"/>
</dbReference>
<dbReference type="Gene3D" id="1.20.1250.20">
    <property type="entry name" value="MFS general substrate transporter like domains"/>
    <property type="match status" value="2"/>
</dbReference>
<dbReference type="InterPro" id="IPR011701">
    <property type="entry name" value="MFS"/>
</dbReference>
<dbReference type="InterPro" id="IPR020846">
    <property type="entry name" value="MFS_dom"/>
</dbReference>
<dbReference type="InterPro" id="IPR036259">
    <property type="entry name" value="MFS_trans_sf"/>
</dbReference>
<dbReference type="PANTHER" id="PTHR23501:SF198">
    <property type="entry name" value="AZOLE RESISTANCE PROTEIN 1-RELATED"/>
    <property type="match status" value="1"/>
</dbReference>
<dbReference type="PANTHER" id="PTHR23501">
    <property type="entry name" value="MAJOR FACILITATOR SUPERFAMILY"/>
    <property type="match status" value="1"/>
</dbReference>
<dbReference type="Pfam" id="PF07690">
    <property type="entry name" value="MFS_1"/>
    <property type="match status" value="1"/>
</dbReference>
<dbReference type="SUPFAM" id="SSF103473">
    <property type="entry name" value="MFS general substrate transporter"/>
    <property type="match status" value="2"/>
</dbReference>
<dbReference type="PROSITE" id="PS50850">
    <property type="entry name" value="MFS"/>
    <property type="match status" value="1"/>
</dbReference>
<sequence>MEETKYSSQQEIEGACGSDASLNARGSNDSPMGLSLYLCLASLTLVLFITALDILIVGTIIDVVAEQFGNYSKTGWLVTGYSLPNAILSLIWGRFASIIGFQHSLILAILIFEAGSLIAALASSMNMLIFGRVVAGVGGSGLQTLCFVIGCTMVGERSRPLVISILSCAFAVAAIVGPIIGGAFTTHVTWRWCFYINLPIGGLAIIMFLLTYKAENKGILQQIKDAIGTISSFTFSKFRHQVNFKRLMNGIIFKFDFFGFALCSAGLVLFLLGLTFGGNKYSWNSGQVITYLVLGVLLFIFSLVYDFFLFDKFNPEPDNISYRPLLLRRLVAKPAIIIVNMVTFLLCTGYNGQMIYSVQFFQLIFASSAWKAGLHLIPIVITNVIAAIASGVITKKLGLVKPLLIFGGVLGVIGAGLMTLMTNTSTKSTQIGVLLLPGFSLGFALQASLMSAQLQITKDRPEAAMDFIEVTAFNTFMKSLGTTLGGVLSTTVFSASFHNKVSRAHLEPYEGKTVDDMILYRLQNYDGSHSTIGNILSDSIKNVFWMDLGFYALGFLFCSFSSNKKLIIPKKDDTPEDNLEDK</sequence>
<comment type="function">
    <text evidence="3">Transporter required for vacuolar uptake of basic amino acids.</text>
</comment>
<comment type="subcellular location">
    <subcellularLocation>
        <location evidence="1">Vacuole membrane</location>
        <topology evidence="1">Multi-pass membrane protein</topology>
    </subcellularLocation>
</comment>
<comment type="similarity">
    <text evidence="4">Belongs to the major facilitator superfamily.</text>
</comment>
<name>VBA5_YEAST</name>
<gene>
    <name type="primary">VBA5</name>
    <name type="ordered locus">YKR105C</name>
</gene>
<reference key="1">
    <citation type="journal article" date="1994" name="Nature">
        <title>Complete DNA sequence of yeast chromosome XI.</title>
        <authorList>
            <person name="Dujon B."/>
            <person name="Alexandraki D."/>
            <person name="Andre B."/>
            <person name="Ansorge W."/>
            <person name="Baladron V."/>
            <person name="Ballesta J.P.G."/>
            <person name="Banrevi A."/>
            <person name="Bolle P.-A."/>
            <person name="Bolotin-Fukuhara M."/>
            <person name="Bossier P."/>
            <person name="Bou G."/>
            <person name="Boyer J."/>
            <person name="Buitrago M.J."/>
            <person name="Cheret G."/>
            <person name="Colleaux L."/>
            <person name="Daignan-Fornier B."/>
            <person name="del Rey F."/>
            <person name="Dion C."/>
            <person name="Domdey H."/>
            <person name="Duesterhoeft A."/>
            <person name="Duesterhus S."/>
            <person name="Entian K.-D."/>
            <person name="Erfle H."/>
            <person name="Esteban P.F."/>
            <person name="Feldmann H."/>
            <person name="Fernandes L."/>
            <person name="Fobo G.M."/>
            <person name="Fritz C."/>
            <person name="Fukuhara H."/>
            <person name="Gabel C."/>
            <person name="Gaillon L."/>
            <person name="Garcia-Cantalejo J.M."/>
            <person name="Garcia-Ramirez J.J."/>
            <person name="Gent M.E."/>
            <person name="Ghazvini M."/>
            <person name="Goffeau A."/>
            <person name="Gonzalez A."/>
            <person name="Grothues D."/>
            <person name="Guerreiro P."/>
            <person name="Hegemann J.H."/>
            <person name="Hewitt N."/>
            <person name="Hilger F."/>
            <person name="Hollenberg C.P."/>
            <person name="Horaitis O."/>
            <person name="Indge K.J."/>
            <person name="Jacquier A."/>
            <person name="James C.M."/>
            <person name="Jauniaux J.-C."/>
            <person name="Jimenez A."/>
            <person name="Keuchel H."/>
            <person name="Kirchrath L."/>
            <person name="Kleine K."/>
            <person name="Koetter P."/>
            <person name="Legrain P."/>
            <person name="Liebl S."/>
            <person name="Louis E.J."/>
            <person name="Maia e Silva A."/>
            <person name="Marck C."/>
            <person name="Monnier A.-L."/>
            <person name="Moestl D."/>
            <person name="Mueller S."/>
            <person name="Obermaier B."/>
            <person name="Oliver S.G."/>
            <person name="Pallier C."/>
            <person name="Pascolo S."/>
            <person name="Pfeiffer F."/>
            <person name="Philippsen P."/>
            <person name="Planta R.J."/>
            <person name="Pohl F.M."/>
            <person name="Pohl T.M."/>
            <person name="Poehlmann R."/>
            <person name="Portetelle D."/>
            <person name="Purnelle B."/>
            <person name="Puzos V."/>
            <person name="Ramezani Rad M."/>
            <person name="Rasmussen S.W."/>
            <person name="Remacha M.A."/>
            <person name="Revuelta J.L."/>
            <person name="Richard G.-F."/>
            <person name="Rieger M."/>
            <person name="Rodrigues-Pousada C."/>
            <person name="Rose M."/>
            <person name="Rupp T."/>
            <person name="Santos M.A."/>
            <person name="Schwager C."/>
            <person name="Sensen C."/>
            <person name="Skala J."/>
            <person name="Soares H."/>
            <person name="Sor F."/>
            <person name="Stegemann J."/>
            <person name="Tettelin H."/>
            <person name="Thierry A."/>
            <person name="Tzermia M."/>
            <person name="Urrestarazu L.A."/>
            <person name="van Dyck L."/>
            <person name="van Vliet-Reedijk J.C."/>
            <person name="Valens M."/>
            <person name="Vandenbol M."/>
            <person name="Vilela C."/>
            <person name="Vissers S."/>
            <person name="von Wettstein D."/>
            <person name="Voss H."/>
            <person name="Wiemann S."/>
            <person name="Xu G."/>
            <person name="Zimmermann J."/>
            <person name="Haasemann M."/>
            <person name="Becker I."/>
            <person name="Mewes H.-W."/>
        </authorList>
    </citation>
    <scope>NUCLEOTIDE SEQUENCE [LARGE SCALE GENOMIC DNA]</scope>
    <source>
        <strain>ATCC 204508 / S288c</strain>
    </source>
</reference>
<reference key="2">
    <citation type="journal article" date="2014" name="G3 (Bethesda)">
        <title>The reference genome sequence of Saccharomyces cerevisiae: Then and now.</title>
        <authorList>
            <person name="Engel S.R."/>
            <person name="Dietrich F.S."/>
            <person name="Fisk D.G."/>
            <person name="Binkley G."/>
            <person name="Balakrishnan R."/>
            <person name="Costanzo M.C."/>
            <person name="Dwight S.S."/>
            <person name="Hitz B.C."/>
            <person name="Karra K."/>
            <person name="Nash R.S."/>
            <person name="Weng S."/>
            <person name="Wong E.D."/>
            <person name="Lloyd P."/>
            <person name="Skrzypek M.S."/>
            <person name="Miyasato S.R."/>
            <person name="Simison M."/>
            <person name="Cherry J.M."/>
        </authorList>
    </citation>
    <scope>GENOME REANNOTATION</scope>
    <source>
        <strain>ATCC 204508 / S288c</strain>
    </source>
</reference>
<reference key="3">
    <citation type="journal article" date="2005" name="J. Biol. Chem.">
        <title>A family of basic amino acid transporters of the vacuolar membrane from Saccharomyces cerevisiae.</title>
        <authorList>
            <person name="Shimazu M."/>
            <person name="Sekito T."/>
            <person name="Akiyama K."/>
            <person name="Ohsumi Y."/>
            <person name="Kakinuma Y."/>
        </authorList>
    </citation>
    <scope>FUNCTION PREDICTION</scope>
</reference>
<protein>
    <recommendedName>
        <fullName>Vacuolar basic amino acid transporter 5</fullName>
    </recommendedName>
</protein>
<accession>P36172</accession>
<accession>D6VXG6</accession>
<proteinExistence type="inferred from homology"/>